<keyword id="KW-0963">Cytoplasm</keyword>
<keyword id="KW-0227">DNA damage</keyword>
<keyword id="KW-0234">DNA repair</keyword>
<keyword id="KW-0378">Hydrolase</keyword>
<name>UNG_XYLFM</name>
<comment type="function">
    <text evidence="1">Excises uracil residues from the DNA which can arise as a result of misincorporation of dUMP residues by DNA polymerase or due to deamination of cytosine.</text>
</comment>
<comment type="catalytic activity">
    <reaction evidence="1">
        <text>Hydrolyzes single-stranded DNA or mismatched double-stranded DNA and polynucleotides, releasing free uracil.</text>
        <dbReference type="EC" id="3.2.2.27"/>
    </reaction>
</comment>
<comment type="subcellular location">
    <subcellularLocation>
        <location evidence="1">Cytoplasm</location>
    </subcellularLocation>
</comment>
<comment type="similarity">
    <text evidence="1">Belongs to the uracil-DNA glycosylase (UDG) superfamily. UNG family.</text>
</comment>
<proteinExistence type="inferred from homology"/>
<reference key="1">
    <citation type="journal article" date="2010" name="J. Bacteriol.">
        <title>Whole genome sequences of two Xylella fastidiosa strains (M12 and M23) causing almond leaf scorch disease in California.</title>
        <authorList>
            <person name="Chen J."/>
            <person name="Xie G."/>
            <person name="Han S."/>
            <person name="Chertkov O."/>
            <person name="Sims D."/>
            <person name="Civerolo E.L."/>
        </authorList>
    </citation>
    <scope>NUCLEOTIDE SEQUENCE [LARGE SCALE GENOMIC DNA]</scope>
    <source>
        <strain>M12</strain>
    </source>
</reference>
<organism>
    <name type="scientific">Xylella fastidiosa (strain M12)</name>
    <dbReference type="NCBI Taxonomy" id="405440"/>
    <lineage>
        <taxon>Bacteria</taxon>
        <taxon>Pseudomonadati</taxon>
        <taxon>Pseudomonadota</taxon>
        <taxon>Gammaproteobacteria</taxon>
        <taxon>Lysobacterales</taxon>
        <taxon>Lysobacteraceae</taxon>
        <taxon>Xylella</taxon>
    </lineage>
</organism>
<evidence type="ECO:0000255" key="1">
    <source>
        <dbReference type="HAMAP-Rule" id="MF_00148"/>
    </source>
</evidence>
<feature type="chain" id="PRO_1000096618" description="Uracil-DNA glycosylase">
    <location>
        <begin position="1"/>
        <end position="253"/>
    </location>
</feature>
<feature type="active site" description="Proton acceptor" evidence="1">
    <location>
        <position position="79"/>
    </location>
</feature>
<sequence>MNEQGEAINSSAESRIQLESSWKAHVGNWLLRPEMRDLSSFLRARKVAGVSVYPPGSQIFAAFEATPFQRVKAVILGQDPYHGQGQAHGLCFSVRPGMPLPPSLLNIYKELEEDLGLLRPDHGCLLPWANRGVLLLNAVLTVEDGRAGAHQGKGWEGFTDHVVDTLNREREGLVFMLWGSYAQAKGKVIDTRRHLVLKAPHPSPLSAHRGFLGCRHFSLCNQYLSQHGLGMVDWSLPPCIALDGAILNGRIAV</sequence>
<dbReference type="EC" id="3.2.2.27" evidence="1"/>
<dbReference type="EMBL" id="CP000941">
    <property type="protein sequence ID" value="ACA13092.1"/>
    <property type="molecule type" value="Genomic_DNA"/>
</dbReference>
<dbReference type="RefSeq" id="WP_004084785.1">
    <property type="nucleotide sequence ID" value="NC_010513.1"/>
</dbReference>
<dbReference type="SMR" id="B0U620"/>
<dbReference type="KEGG" id="xfm:Xfasm12_2241"/>
<dbReference type="HOGENOM" id="CLU_032162_3_0_6"/>
<dbReference type="GO" id="GO:0005737">
    <property type="term" value="C:cytoplasm"/>
    <property type="evidence" value="ECO:0007669"/>
    <property type="project" value="UniProtKB-SubCell"/>
</dbReference>
<dbReference type="GO" id="GO:0004844">
    <property type="term" value="F:uracil DNA N-glycosylase activity"/>
    <property type="evidence" value="ECO:0007669"/>
    <property type="project" value="UniProtKB-UniRule"/>
</dbReference>
<dbReference type="GO" id="GO:0097510">
    <property type="term" value="P:base-excision repair, AP site formation via deaminated base removal"/>
    <property type="evidence" value="ECO:0007669"/>
    <property type="project" value="TreeGrafter"/>
</dbReference>
<dbReference type="CDD" id="cd10027">
    <property type="entry name" value="UDG-F1-like"/>
    <property type="match status" value="1"/>
</dbReference>
<dbReference type="FunFam" id="3.40.470.10:FF:000001">
    <property type="entry name" value="Uracil-DNA glycosylase"/>
    <property type="match status" value="1"/>
</dbReference>
<dbReference type="Gene3D" id="3.40.470.10">
    <property type="entry name" value="Uracil-DNA glycosylase-like domain"/>
    <property type="match status" value="1"/>
</dbReference>
<dbReference type="HAMAP" id="MF_00148">
    <property type="entry name" value="UDG"/>
    <property type="match status" value="1"/>
</dbReference>
<dbReference type="InterPro" id="IPR002043">
    <property type="entry name" value="UDG_fam1"/>
</dbReference>
<dbReference type="InterPro" id="IPR018085">
    <property type="entry name" value="Ura-DNA_Glyclase_AS"/>
</dbReference>
<dbReference type="InterPro" id="IPR005122">
    <property type="entry name" value="Uracil-DNA_glycosylase-like"/>
</dbReference>
<dbReference type="InterPro" id="IPR036895">
    <property type="entry name" value="Uracil-DNA_glycosylase-like_sf"/>
</dbReference>
<dbReference type="NCBIfam" id="NF003588">
    <property type="entry name" value="PRK05254.1-1"/>
    <property type="match status" value="1"/>
</dbReference>
<dbReference type="NCBIfam" id="NF003589">
    <property type="entry name" value="PRK05254.1-2"/>
    <property type="match status" value="1"/>
</dbReference>
<dbReference type="NCBIfam" id="NF003591">
    <property type="entry name" value="PRK05254.1-4"/>
    <property type="match status" value="1"/>
</dbReference>
<dbReference type="NCBIfam" id="NF003592">
    <property type="entry name" value="PRK05254.1-5"/>
    <property type="match status" value="1"/>
</dbReference>
<dbReference type="NCBIfam" id="TIGR00628">
    <property type="entry name" value="ung"/>
    <property type="match status" value="1"/>
</dbReference>
<dbReference type="PANTHER" id="PTHR11264">
    <property type="entry name" value="URACIL-DNA GLYCOSYLASE"/>
    <property type="match status" value="1"/>
</dbReference>
<dbReference type="PANTHER" id="PTHR11264:SF0">
    <property type="entry name" value="URACIL-DNA GLYCOSYLASE"/>
    <property type="match status" value="1"/>
</dbReference>
<dbReference type="Pfam" id="PF03167">
    <property type="entry name" value="UDG"/>
    <property type="match status" value="1"/>
</dbReference>
<dbReference type="SMART" id="SM00986">
    <property type="entry name" value="UDG"/>
    <property type="match status" value="1"/>
</dbReference>
<dbReference type="SMART" id="SM00987">
    <property type="entry name" value="UreE_C"/>
    <property type="match status" value="1"/>
</dbReference>
<dbReference type="SUPFAM" id="SSF52141">
    <property type="entry name" value="Uracil-DNA glycosylase-like"/>
    <property type="match status" value="1"/>
</dbReference>
<dbReference type="PROSITE" id="PS00130">
    <property type="entry name" value="U_DNA_GLYCOSYLASE"/>
    <property type="match status" value="1"/>
</dbReference>
<accession>B0U620</accession>
<protein>
    <recommendedName>
        <fullName evidence="1">Uracil-DNA glycosylase</fullName>
        <shortName evidence="1">UDG</shortName>
        <ecNumber evidence="1">3.2.2.27</ecNumber>
    </recommendedName>
</protein>
<gene>
    <name evidence="1" type="primary">ung</name>
    <name type="ordered locus">Xfasm12_2241</name>
</gene>